<protein>
    <recommendedName>
        <fullName evidence="1">Cytochrome b559 subunit beta</fullName>
    </recommendedName>
    <alternativeName>
        <fullName evidence="1">PSII reaction center subunit VI</fullName>
    </alternativeName>
</protein>
<evidence type="ECO:0000255" key="1">
    <source>
        <dbReference type="HAMAP-Rule" id="MF_00643"/>
    </source>
</evidence>
<reference key="1">
    <citation type="journal article" date="2005" name="BMC Biol.">
        <title>The complete chloroplast DNA sequences of the charophycean green algae Staurastrum and Zygnema reveal that the chloroplast genome underwent extensive changes during the evolution of the Zygnematales.</title>
        <authorList>
            <person name="Turmel M."/>
            <person name="Otis C."/>
            <person name="Lemieux C."/>
        </authorList>
    </citation>
    <scope>NUCLEOTIDE SEQUENCE [LARGE SCALE GENOMIC DNA]</scope>
</reference>
<organism>
    <name type="scientific">Staurastrum punctulatum</name>
    <name type="common">Green alga</name>
    <name type="synonym">Cosmoastrum punctulatum</name>
    <dbReference type="NCBI Taxonomy" id="102822"/>
    <lineage>
        <taxon>Eukaryota</taxon>
        <taxon>Viridiplantae</taxon>
        <taxon>Streptophyta</taxon>
        <taxon>Zygnematophyceae</taxon>
        <taxon>Zygnematophycidae</taxon>
        <taxon>Desmidiales</taxon>
        <taxon>Desmidiaceae</taxon>
        <taxon>Staurastrum</taxon>
    </lineage>
</organism>
<comment type="function">
    <text evidence="1">This b-type cytochrome is tightly associated with the reaction center of photosystem II (PSII). PSII is a light-driven water:plastoquinone oxidoreductase that uses light energy to abstract electrons from H(2)O, generating O(2) and a proton gradient subsequently used for ATP formation. It consists of a core antenna complex that captures photons, and an electron transfer chain that converts photonic excitation into a charge separation.</text>
</comment>
<comment type="cofactor">
    <cofactor evidence="1">
        <name>heme b</name>
        <dbReference type="ChEBI" id="CHEBI:60344"/>
    </cofactor>
    <text evidence="1">With its partner (PsbE) binds heme. PSII binds additional chlorophylls, carotenoids and specific lipids.</text>
</comment>
<comment type="subunit">
    <text evidence="1">Heterodimer of an alpha subunit and a beta subunit. PSII is composed of 1 copy each of membrane proteins PsbA, PsbB, PsbC, PsbD, PsbE, PsbF, PsbH, PsbI, PsbJ, PsbK, PsbL, PsbM, PsbT, PsbX, PsbY, PsbZ, Psb30/Ycf12, at least 3 peripheral proteins of the oxygen-evolving complex and a large number of cofactors. It forms dimeric complexes.</text>
</comment>
<comment type="subcellular location">
    <subcellularLocation>
        <location evidence="1">Plastid</location>
        <location evidence="1">Chloroplast thylakoid membrane</location>
        <topology evidence="1">Single-pass membrane protein</topology>
    </subcellularLocation>
</comment>
<comment type="similarity">
    <text evidence="1">Belongs to the PsbE/PsbF family.</text>
</comment>
<name>PSBF_STAPU</name>
<geneLocation type="chloroplast"/>
<keyword id="KW-0150">Chloroplast</keyword>
<keyword id="KW-0249">Electron transport</keyword>
<keyword id="KW-0349">Heme</keyword>
<keyword id="KW-0408">Iron</keyword>
<keyword id="KW-0472">Membrane</keyword>
<keyword id="KW-0479">Metal-binding</keyword>
<keyword id="KW-0602">Photosynthesis</keyword>
<keyword id="KW-0604">Photosystem II</keyword>
<keyword id="KW-0934">Plastid</keyword>
<keyword id="KW-0793">Thylakoid</keyword>
<keyword id="KW-0812">Transmembrane</keyword>
<keyword id="KW-1133">Transmembrane helix</keyword>
<keyword id="KW-0813">Transport</keyword>
<feature type="chain" id="PRO_0000233652" description="Cytochrome b559 subunit beta">
    <location>
        <begin position="1"/>
        <end position="39"/>
    </location>
</feature>
<feature type="transmembrane region" description="Helical" evidence="1">
    <location>
        <begin position="14"/>
        <end position="30"/>
    </location>
</feature>
<feature type="binding site" description="axial binding residue" evidence="1">
    <location>
        <position position="18"/>
    </location>
    <ligand>
        <name>heme</name>
        <dbReference type="ChEBI" id="CHEBI:30413"/>
        <note>ligand shared with alpha subunit</note>
    </ligand>
    <ligandPart>
        <name>Fe</name>
        <dbReference type="ChEBI" id="CHEBI:18248"/>
    </ligandPart>
</feature>
<sequence>MTIERTYPIFTFRWLAIHGLAVPTVFFLGSISAMQFIQR</sequence>
<proteinExistence type="inferred from homology"/>
<accession>Q32RX6</accession>
<gene>
    <name evidence="1" type="primary">psbF</name>
</gene>
<dbReference type="EMBL" id="AY958085">
    <property type="protein sequence ID" value="AAX45726.1"/>
    <property type="molecule type" value="Genomic_DNA"/>
</dbReference>
<dbReference type="RefSeq" id="YP_636400.1">
    <property type="nucleotide sequence ID" value="NC_008116.1"/>
</dbReference>
<dbReference type="SMR" id="Q32RX6"/>
<dbReference type="GeneID" id="4108685"/>
<dbReference type="GO" id="GO:0009535">
    <property type="term" value="C:chloroplast thylakoid membrane"/>
    <property type="evidence" value="ECO:0007669"/>
    <property type="project" value="UniProtKB-SubCell"/>
</dbReference>
<dbReference type="GO" id="GO:0009539">
    <property type="term" value="C:photosystem II reaction center"/>
    <property type="evidence" value="ECO:0007669"/>
    <property type="project" value="InterPro"/>
</dbReference>
<dbReference type="GO" id="GO:0009055">
    <property type="term" value="F:electron transfer activity"/>
    <property type="evidence" value="ECO:0007669"/>
    <property type="project" value="UniProtKB-UniRule"/>
</dbReference>
<dbReference type="GO" id="GO:0020037">
    <property type="term" value="F:heme binding"/>
    <property type="evidence" value="ECO:0007669"/>
    <property type="project" value="InterPro"/>
</dbReference>
<dbReference type="GO" id="GO:0005506">
    <property type="term" value="F:iron ion binding"/>
    <property type="evidence" value="ECO:0007669"/>
    <property type="project" value="UniProtKB-UniRule"/>
</dbReference>
<dbReference type="GO" id="GO:0009767">
    <property type="term" value="P:photosynthetic electron transport chain"/>
    <property type="evidence" value="ECO:0007669"/>
    <property type="project" value="InterPro"/>
</dbReference>
<dbReference type="HAMAP" id="MF_00643">
    <property type="entry name" value="PSII_PsbF"/>
    <property type="match status" value="1"/>
</dbReference>
<dbReference type="InterPro" id="IPR006241">
    <property type="entry name" value="PSII_cyt_b559_bsu"/>
</dbReference>
<dbReference type="InterPro" id="IPR006216">
    <property type="entry name" value="PSII_cyt_b559_CS"/>
</dbReference>
<dbReference type="InterPro" id="IPR013081">
    <property type="entry name" value="PSII_cyt_b559_N"/>
</dbReference>
<dbReference type="NCBIfam" id="TIGR01333">
    <property type="entry name" value="cyt_b559_beta"/>
    <property type="match status" value="1"/>
</dbReference>
<dbReference type="Pfam" id="PF00283">
    <property type="entry name" value="Cytochrom_B559"/>
    <property type="match status" value="1"/>
</dbReference>
<dbReference type="PIRSF" id="PIRSF000037">
    <property type="entry name" value="PsbF"/>
    <property type="match status" value="1"/>
</dbReference>
<dbReference type="SUPFAM" id="SSF161045">
    <property type="entry name" value="Cytochrome b559 subunits"/>
    <property type="match status" value="1"/>
</dbReference>
<dbReference type="PROSITE" id="PS00537">
    <property type="entry name" value="CYTOCHROME_B559"/>
    <property type="match status" value="1"/>
</dbReference>